<evidence type="ECO:0000250" key="1"/>
<evidence type="ECO:0000255" key="2">
    <source>
        <dbReference type="PROSITE-ProRule" id="PRU01150"/>
    </source>
</evidence>
<evidence type="ECO:0000305" key="3"/>
<sequence>MPMVTRRLRDPDINPCLSESDASTRCMDENNYDRERCSSYFLKYKNCRRFWNSVMIQRRQNGVQPSMPTAAERDEILGAMQKMPY</sequence>
<protein>
    <recommendedName>
        <fullName>Coiled-coil-helix-coiled-coil-helix domain-containing protein 7</fullName>
    </recommendedName>
</protein>
<comment type="subunit">
    <text evidence="1">Monomer.</text>
</comment>
<comment type="subcellular location">
    <subcellularLocation>
        <location evidence="3">Mitochondrion intermembrane space</location>
    </subcellularLocation>
</comment>
<comment type="similarity">
    <text evidence="3">Belongs to the CHCHD7 family.</text>
</comment>
<reference key="1">
    <citation type="journal article" date="2005" name="Science">
        <title>The transcriptional landscape of the mammalian genome.</title>
        <authorList>
            <person name="Carninci P."/>
            <person name="Kasukawa T."/>
            <person name="Katayama S."/>
            <person name="Gough J."/>
            <person name="Frith M.C."/>
            <person name="Maeda N."/>
            <person name="Oyama R."/>
            <person name="Ravasi T."/>
            <person name="Lenhard B."/>
            <person name="Wells C."/>
            <person name="Kodzius R."/>
            <person name="Shimokawa K."/>
            <person name="Bajic V.B."/>
            <person name="Brenner S.E."/>
            <person name="Batalov S."/>
            <person name="Forrest A.R."/>
            <person name="Zavolan M."/>
            <person name="Davis M.J."/>
            <person name="Wilming L.G."/>
            <person name="Aidinis V."/>
            <person name="Allen J.E."/>
            <person name="Ambesi-Impiombato A."/>
            <person name="Apweiler R."/>
            <person name="Aturaliya R.N."/>
            <person name="Bailey T.L."/>
            <person name="Bansal M."/>
            <person name="Baxter L."/>
            <person name="Beisel K.W."/>
            <person name="Bersano T."/>
            <person name="Bono H."/>
            <person name="Chalk A.M."/>
            <person name="Chiu K.P."/>
            <person name="Choudhary V."/>
            <person name="Christoffels A."/>
            <person name="Clutterbuck D.R."/>
            <person name="Crowe M.L."/>
            <person name="Dalla E."/>
            <person name="Dalrymple B.P."/>
            <person name="de Bono B."/>
            <person name="Della Gatta G."/>
            <person name="di Bernardo D."/>
            <person name="Down T."/>
            <person name="Engstrom P."/>
            <person name="Fagiolini M."/>
            <person name="Faulkner G."/>
            <person name="Fletcher C.F."/>
            <person name="Fukushima T."/>
            <person name="Furuno M."/>
            <person name="Futaki S."/>
            <person name="Gariboldi M."/>
            <person name="Georgii-Hemming P."/>
            <person name="Gingeras T.R."/>
            <person name="Gojobori T."/>
            <person name="Green R.E."/>
            <person name="Gustincich S."/>
            <person name="Harbers M."/>
            <person name="Hayashi Y."/>
            <person name="Hensch T.K."/>
            <person name="Hirokawa N."/>
            <person name="Hill D."/>
            <person name="Huminiecki L."/>
            <person name="Iacono M."/>
            <person name="Ikeo K."/>
            <person name="Iwama A."/>
            <person name="Ishikawa T."/>
            <person name="Jakt M."/>
            <person name="Kanapin A."/>
            <person name="Katoh M."/>
            <person name="Kawasawa Y."/>
            <person name="Kelso J."/>
            <person name="Kitamura H."/>
            <person name="Kitano H."/>
            <person name="Kollias G."/>
            <person name="Krishnan S.P."/>
            <person name="Kruger A."/>
            <person name="Kummerfeld S.K."/>
            <person name="Kurochkin I.V."/>
            <person name="Lareau L.F."/>
            <person name="Lazarevic D."/>
            <person name="Lipovich L."/>
            <person name="Liu J."/>
            <person name="Liuni S."/>
            <person name="McWilliam S."/>
            <person name="Madan Babu M."/>
            <person name="Madera M."/>
            <person name="Marchionni L."/>
            <person name="Matsuda H."/>
            <person name="Matsuzawa S."/>
            <person name="Miki H."/>
            <person name="Mignone F."/>
            <person name="Miyake S."/>
            <person name="Morris K."/>
            <person name="Mottagui-Tabar S."/>
            <person name="Mulder N."/>
            <person name="Nakano N."/>
            <person name="Nakauchi H."/>
            <person name="Ng P."/>
            <person name="Nilsson R."/>
            <person name="Nishiguchi S."/>
            <person name="Nishikawa S."/>
            <person name="Nori F."/>
            <person name="Ohara O."/>
            <person name="Okazaki Y."/>
            <person name="Orlando V."/>
            <person name="Pang K.C."/>
            <person name="Pavan W.J."/>
            <person name="Pavesi G."/>
            <person name="Pesole G."/>
            <person name="Petrovsky N."/>
            <person name="Piazza S."/>
            <person name="Reed J."/>
            <person name="Reid J.F."/>
            <person name="Ring B.Z."/>
            <person name="Ringwald M."/>
            <person name="Rost B."/>
            <person name="Ruan Y."/>
            <person name="Salzberg S.L."/>
            <person name="Sandelin A."/>
            <person name="Schneider C."/>
            <person name="Schoenbach C."/>
            <person name="Sekiguchi K."/>
            <person name="Semple C.A."/>
            <person name="Seno S."/>
            <person name="Sessa L."/>
            <person name="Sheng Y."/>
            <person name="Shibata Y."/>
            <person name="Shimada H."/>
            <person name="Shimada K."/>
            <person name="Silva D."/>
            <person name="Sinclair B."/>
            <person name="Sperling S."/>
            <person name="Stupka E."/>
            <person name="Sugiura K."/>
            <person name="Sultana R."/>
            <person name="Takenaka Y."/>
            <person name="Taki K."/>
            <person name="Tammoja K."/>
            <person name="Tan S.L."/>
            <person name="Tang S."/>
            <person name="Taylor M.S."/>
            <person name="Tegner J."/>
            <person name="Teichmann S.A."/>
            <person name="Ueda H.R."/>
            <person name="van Nimwegen E."/>
            <person name="Verardo R."/>
            <person name="Wei C.L."/>
            <person name="Yagi K."/>
            <person name="Yamanishi H."/>
            <person name="Zabarovsky E."/>
            <person name="Zhu S."/>
            <person name="Zimmer A."/>
            <person name="Hide W."/>
            <person name="Bult C."/>
            <person name="Grimmond S.M."/>
            <person name="Teasdale R.D."/>
            <person name="Liu E.T."/>
            <person name="Brusic V."/>
            <person name="Quackenbush J."/>
            <person name="Wahlestedt C."/>
            <person name="Mattick J.S."/>
            <person name="Hume D.A."/>
            <person name="Kai C."/>
            <person name="Sasaki D."/>
            <person name="Tomaru Y."/>
            <person name="Fukuda S."/>
            <person name="Kanamori-Katayama M."/>
            <person name="Suzuki M."/>
            <person name="Aoki J."/>
            <person name="Arakawa T."/>
            <person name="Iida J."/>
            <person name="Imamura K."/>
            <person name="Itoh M."/>
            <person name="Kato T."/>
            <person name="Kawaji H."/>
            <person name="Kawagashira N."/>
            <person name="Kawashima T."/>
            <person name="Kojima M."/>
            <person name="Kondo S."/>
            <person name="Konno H."/>
            <person name="Nakano K."/>
            <person name="Ninomiya N."/>
            <person name="Nishio T."/>
            <person name="Okada M."/>
            <person name="Plessy C."/>
            <person name="Shibata K."/>
            <person name="Shiraki T."/>
            <person name="Suzuki S."/>
            <person name="Tagami M."/>
            <person name="Waki K."/>
            <person name="Watahiki A."/>
            <person name="Okamura-Oho Y."/>
            <person name="Suzuki H."/>
            <person name="Kawai J."/>
            <person name="Hayashizaki Y."/>
        </authorList>
    </citation>
    <scope>NUCLEOTIDE SEQUENCE [LARGE SCALE MRNA]</scope>
    <source>
        <strain>C57BL/6J</strain>
        <tissue>Mammary gland</tissue>
        <tissue>Pancreas</tissue>
    </source>
</reference>
<reference key="2">
    <citation type="journal article" date="2004" name="Genome Res.">
        <title>The status, quality, and expansion of the NIH full-length cDNA project: the Mammalian Gene Collection (MGC).</title>
        <authorList>
            <consortium name="The MGC Project Team"/>
        </authorList>
    </citation>
    <scope>NUCLEOTIDE SEQUENCE [LARGE SCALE MRNA]</scope>
    <source>
        <strain>FVB/N-3</strain>
        <tissue>Mammary tumor</tissue>
    </source>
</reference>
<reference key="3">
    <citation type="journal article" date="2010" name="Cell">
        <title>A tissue-specific atlas of mouse protein phosphorylation and expression.</title>
        <authorList>
            <person name="Huttlin E.L."/>
            <person name="Jedrychowski M.P."/>
            <person name="Elias J.E."/>
            <person name="Goswami T."/>
            <person name="Rad R."/>
            <person name="Beausoleil S.A."/>
            <person name="Villen J."/>
            <person name="Haas W."/>
            <person name="Sowa M.E."/>
            <person name="Gygi S.P."/>
        </authorList>
    </citation>
    <scope>IDENTIFICATION BY MASS SPECTROMETRY [LARGE SCALE ANALYSIS]</scope>
    <source>
        <tissue>Brown adipose tissue</tissue>
        <tissue>Kidney</tissue>
        <tissue>Liver</tissue>
    </source>
</reference>
<name>CHCH7_MOUSE</name>
<dbReference type="EMBL" id="AK003308">
    <property type="protein sequence ID" value="BAC25029.1"/>
    <property type="molecule type" value="mRNA"/>
</dbReference>
<dbReference type="EMBL" id="AK007844">
    <property type="protein sequence ID" value="BAC25190.1"/>
    <property type="molecule type" value="mRNA"/>
</dbReference>
<dbReference type="EMBL" id="AK145105">
    <property type="protein sequence ID" value="BAE26238.1"/>
    <property type="molecule type" value="mRNA"/>
</dbReference>
<dbReference type="EMBL" id="AK168647">
    <property type="protein sequence ID" value="BAE40504.1"/>
    <property type="molecule type" value="mRNA"/>
</dbReference>
<dbReference type="EMBL" id="BC030366">
    <property type="protein sequence ID" value="AAH30366.1"/>
    <property type="molecule type" value="mRNA"/>
</dbReference>
<dbReference type="CCDS" id="CCDS38686.1"/>
<dbReference type="RefSeq" id="NP_001177251.1">
    <property type="nucleotide sequence ID" value="NM_001190322.2"/>
</dbReference>
<dbReference type="RefSeq" id="NP_001177252.1">
    <property type="nucleotide sequence ID" value="NM_001190323.2"/>
</dbReference>
<dbReference type="RefSeq" id="NP_001177253.1">
    <property type="nucleotide sequence ID" value="NM_001190324.2"/>
</dbReference>
<dbReference type="RefSeq" id="NP_001272733.1">
    <property type="nucleotide sequence ID" value="NM_001285804.1"/>
</dbReference>
<dbReference type="RefSeq" id="NP_852056.1">
    <property type="nucleotide sequence ID" value="NM_181391.4"/>
</dbReference>
<dbReference type="RefSeq" id="XP_017175837.1">
    <property type="nucleotide sequence ID" value="XM_017320348.1"/>
</dbReference>
<dbReference type="RefSeq" id="XP_017175838.1">
    <property type="nucleotide sequence ID" value="XM_017320349.3"/>
</dbReference>
<dbReference type="SMR" id="Q8K2Q5"/>
<dbReference type="FunCoup" id="Q8K2Q5">
    <property type="interactions" value="1188"/>
</dbReference>
<dbReference type="STRING" id="10090.ENSMUSP00000113811"/>
<dbReference type="PhosphoSitePlus" id="Q8K2Q5"/>
<dbReference type="jPOST" id="Q8K2Q5"/>
<dbReference type="PaxDb" id="10090-ENSMUSP00000041196"/>
<dbReference type="ProteomicsDB" id="279071"/>
<dbReference type="Pumba" id="Q8K2Q5"/>
<dbReference type="Antibodypedia" id="42406">
    <property type="antibodies" value="54 antibodies from 23 providers"/>
</dbReference>
<dbReference type="DNASU" id="66433"/>
<dbReference type="Ensembl" id="ENSMUST00000041122.11">
    <property type="protein sequence ID" value="ENSMUSP00000041196.5"/>
    <property type="gene ID" value="ENSMUSG00000042198.13"/>
</dbReference>
<dbReference type="Ensembl" id="ENSMUST00000108386.8">
    <property type="protein sequence ID" value="ENSMUSP00000104023.2"/>
    <property type="gene ID" value="ENSMUSG00000042198.13"/>
</dbReference>
<dbReference type="Ensembl" id="ENSMUST00000119307.8">
    <property type="protein sequence ID" value="ENSMUSP00000113811.2"/>
    <property type="gene ID" value="ENSMUSG00000042198.13"/>
</dbReference>
<dbReference type="Ensembl" id="ENSMUST00000119403.2">
    <property type="protein sequence ID" value="ENSMUSP00000113613.2"/>
    <property type="gene ID" value="ENSMUSG00000042198.13"/>
</dbReference>
<dbReference type="Ensembl" id="ENSMUST00000121110.8">
    <property type="protein sequence ID" value="ENSMUSP00000113276.2"/>
    <property type="gene ID" value="ENSMUSG00000042198.13"/>
</dbReference>
<dbReference type="Ensembl" id="ENSMUST00000121651.8">
    <property type="protein sequence ID" value="ENSMUSP00000112967.2"/>
    <property type="gene ID" value="ENSMUSG00000042198.13"/>
</dbReference>
<dbReference type="Ensembl" id="ENSMUST00000150618.8">
    <property type="protein sequence ID" value="ENSMUSP00000118860.2"/>
    <property type="gene ID" value="ENSMUSG00000042198.13"/>
</dbReference>
<dbReference type="GeneID" id="66433"/>
<dbReference type="KEGG" id="mmu:66433"/>
<dbReference type="UCSC" id="uc008rwq.2">
    <property type="organism name" value="mouse"/>
</dbReference>
<dbReference type="AGR" id="MGI:1913683"/>
<dbReference type="CTD" id="79145"/>
<dbReference type="MGI" id="MGI:1913683">
    <property type="gene designation" value="Chchd7"/>
</dbReference>
<dbReference type="VEuPathDB" id="HostDB:ENSMUSG00000042198"/>
<dbReference type="eggNOG" id="KOG4618">
    <property type="taxonomic scope" value="Eukaryota"/>
</dbReference>
<dbReference type="GeneTree" id="ENSGT00390000001029"/>
<dbReference type="InParanoid" id="Q8K2Q5"/>
<dbReference type="OMA" id="QELSYKC"/>
<dbReference type="OrthoDB" id="9971592at2759"/>
<dbReference type="PhylomeDB" id="Q8K2Q5"/>
<dbReference type="TreeFam" id="TF300284"/>
<dbReference type="BioGRID-ORCS" id="66433">
    <property type="hits" value="4 hits in 77 CRISPR screens"/>
</dbReference>
<dbReference type="ChiTaRS" id="Chchd7">
    <property type="organism name" value="mouse"/>
</dbReference>
<dbReference type="PRO" id="PR:Q8K2Q5"/>
<dbReference type="Proteomes" id="UP000000589">
    <property type="component" value="Chromosome 4"/>
</dbReference>
<dbReference type="RNAct" id="Q8K2Q5">
    <property type="molecule type" value="protein"/>
</dbReference>
<dbReference type="Bgee" id="ENSMUSG00000042198">
    <property type="expression patterns" value="Expressed in interventricular septum and 268 other cell types or tissues"/>
</dbReference>
<dbReference type="ExpressionAtlas" id="Q8K2Q5">
    <property type="expression patterns" value="baseline and differential"/>
</dbReference>
<dbReference type="GO" id="GO:0005758">
    <property type="term" value="C:mitochondrial intermembrane space"/>
    <property type="evidence" value="ECO:0007669"/>
    <property type="project" value="UniProtKB-SubCell"/>
</dbReference>
<dbReference type="GO" id="GO:0005739">
    <property type="term" value="C:mitochondrion"/>
    <property type="evidence" value="ECO:0007005"/>
    <property type="project" value="MGI"/>
</dbReference>
<dbReference type="Gene3D" id="1.10.287.1130">
    <property type="entry name" value="CytochromE C oxidase copper chaperone"/>
    <property type="match status" value="1"/>
</dbReference>
<dbReference type="InterPro" id="IPR051040">
    <property type="entry name" value="COX23"/>
</dbReference>
<dbReference type="InterPro" id="IPR048280">
    <property type="entry name" value="COX6B-like"/>
</dbReference>
<dbReference type="InterPro" id="IPR009069">
    <property type="entry name" value="Cys_alpha_HP_mot_SF"/>
</dbReference>
<dbReference type="PANTHER" id="PTHR46811">
    <property type="entry name" value="COILED-COIL-HELIX-COILED-COIL-HELIX DOMAIN-CONTAINING PROTEIN 7"/>
    <property type="match status" value="1"/>
</dbReference>
<dbReference type="PANTHER" id="PTHR46811:SF1">
    <property type="entry name" value="COILED-COIL-HELIX-COILED-COIL-HELIX DOMAIN-CONTAINING PROTEIN 7"/>
    <property type="match status" value="1"/>
</dbReference>
<dbReference type="Pfam" id="PF02297">
    <property type="entry name" value="COX6B"/>
    <property type="match status" value="1"/>
</dbReference>
<dbReference type="SUPFAM" id="SSF47072">
    <property type="entry name" value="Cysteine alpha-hairpin motif"/>
    <property type="match status" value="1"/>
</dbReference>
<dbReference type="PROSITE" id="PS51808">
    <property type="entry name" value="CHCH"/>
    <property type="match status" value="1"/>
</dbReference>
<keyword id="KW-1015">Disulfide bond</keyword>
<keyword id="KW-0496">Mitochondrion</keyword>
<keyword id="KW-1185">Reference proteome</keyword>
<feature type="chain" id="PRO_0000129173" description="Coiled-coil-helix-coiled-coil-helix domain-containing protein 7">
    <location>
        <begin position="1"/>
        <end position="85"/>
    </location>
</feature>
<feature type="domain" description="CHCH" evidence="2">
    <location>
        <begin position="13"/>
        <end position="55"/>
    </location>
</feature>
<feature type="short sequence motif" description="Cx9C motif 1" evidence="2">
    <location>
        <begin position="16"/>
        <end position="26"/>
    </location>
</feature>
<feature type="short sequence motif" description="Cx9C motif 2" evidence="2">
    <location>
        <begin position="37"/>
        <end position="47"/>
    </location>
</feature>
<feature type="disulfide bond" evidence="2">
    <location>
        <begin position="16"/>
        <end position="47"/>
    </location>
</feature>
<feature type="disulfide bond" evidence="2">
    <location>
        <begin position="26"/>
        <end position="37"/>
    </location>
</feature>
<organism>
    <name type="scientific">Mus musculus</name>
    <name type="common">Mouse</name>
    <dbReference type="NCBI Taxonomy" id="10090"/>
    <lineage>
        <taxon>Eukaryota</taxon>
        <taxon>Metazoa</taxon>
        <taxon>Chordata</taxon>
        <taxon>Craniata</taxon>
        <taxon>Vertebrata</taxon>
        <taxon>Euteleostomi</taxon>
        <taxon>Mammalia</taxon>
        <taxon>Eutheria</taxon>
        <taxon>Euarchontoglires</taxon>
        <taxon>Glires</taxon>
        <taxon>Rodentia</taxon>
        <taxon>Myomorpha</taxon>
        <taxon>Muroidea</taxon>
        <taxon>Muridae</taxon>
        <taxon>Murinae</taxon>
        <taxon>Mus</taxon>
        <taxon>Mus</taxon>
    </lineage>
</organism>
<gene>
    <name type="primary">Chchd7</name>
</gene>
<accession>Q8K2Q5</accession>
<accession>Q3TGP4</accession>
<proteinExistence type="evidence at protein level"/>